<keyword id="KW-0032">Aminotransferase</keyword>
<keyword id="KW-0093">Biotin biosynthesis</keyword>
<keyword id="KW-0963">Cytoplasm</keyword>
<keyword id="KW-0663">Pyridoxal phosphate</keyword>
<keyword id="KW-1185">Reference proteome</keyword>
<keyword id="KW-0949">S-adenosyl-L-methionine</keyword>
<keyword id="KW-0808">Transferase</keyword>
<protein>
    <recommendedName>
        <fullName evidence="1">Adenosylmethionine-8-amino-7-oxononanoate aminotransferase</fullName>
        <ecNumber evidence="1">2.6.1.62</ecNumber>
    </recommendedName>
    <alternativeName>
        <fullName evidence="1">7,8-diamino-pelargonic acid aminotransferase</fullName>
        <shortName evidence="1">DAPA AT</shortName>
        <shortName evidence="1">DAPA aminotransferase</shortName>
    </alternativeName>
    <alternativeName>
        <fullName evidence="1">7,8-diaminononanoate synthase</fullName>
        <shortName evidence="1">DANS</shortName>
    </alternativeName>
    <alternativeName>
        <fullName evidence="1">Diaminopelargonic acid synthase</fullName>
    </alternativeName>
</protein>
<sequence length="423" mass="45741">MENPSLRELDHRNIWHPYAAPGVRNRLVTKTDGVFLTLEDGSTVIDAMSSWWSAIHGHGHPRLKAAAQKQIDTMSHVMFGGLTHEPAIKLTHKLLNLTGNSFDHVFYSDSGSVSVEVAIKMALQASKGQGHPERTKLLTWRSGYHGDTFTAMSVCDPENGMHSLWKGTLPEQIFAPAPPVRGSSPQAISEYLRSMELLIDETVSAIIIEPIVQGAGGMRFHDVALIEGVATLCKKHDRFLIVDEIATGFGRTGELFATLSNGLQPDIMCVGKALTGGFMSFAATLCTDKVAQLISTPNGGGALMHGPTFMANPLACAVSHASLEIIETGMWQKQVKRIEAELIAGLSPLQHLPGVADVRVLGAIGVIEMEQNVNVEEATQAALDHGVWIRPFGRLLYVMPPYITTSEQCAQICTALHAAVKGK</sequence>
<evidence type="ECO:0000255" key="1">
    <source>
        <dbReference type="HAMAP-Rule" id="MF_00834"/>
    </source>
</evidence>
<evidence type="ECO:0000269" key="2">
    <source>
    </source>
</evidence>
<evidence type="ECO:0000305" key="3"/>
<name>BIOA_CORGL</name>
<organism>
    <name type="scientific">Corynebacterium glutamicum (strain ATCC 13032 / DSM 20300 / JCM 1318 / BCRC 11384 / CCUG 27702 / LMG 3730 / NBRC 12168 / NCIMB 10025 / NRRL B-2784 / 534)</name>
    <dbReference type="NCBI Taxonomy" id="196627"/>
    <lineage>
        <taxon>Bacteria</taxon>
        <taxon>Bacillati</taxon>
        <taxon>Actinomycetota</taxon>
        <taxon>Actinomycetes</taxon>
        <taxon>Mycobacteriales</taxon>
        <taxon>Corynebacteriaceae</taxon>
        <taxon>Corynebacterium</taxon>
    </lineage>
</organism>
<dbReference type="EC" id="2.6.1.62" evidence="1"/>
<dbReference type="EMBL" id="D14083">
    <property type="protein sequence ID" value="BAA03167.1"/>
    <property type="molecule type" value="Genomic_DNA"/>
</dbReference>
<dbReference type="EMBL" id="BA000036">
    <property type="protein sequence ID" value="BAB99997.1"/>
    <property type="molecule type" value="Genomic_DNA"/>
</dbReference>
<dbReference type="EMBL" id="BX927155">
    <property type="protein sequence ID" value="CAF21266.1"/>
    <property type="molecule type" value="Genomic_DNA"/>
</dbReference>
<dbReference type="PIR" id="I40336">
    <property type="entry name" value="I40336"/>
</dbReference>
<dbReference type="RefSeq" id="NP_601805.1">
    <property type="nucleotide sequence ID" value="NC_003450.3"/>
</dbReference>
<dbReference type="RefSeq" id="WP_011015243.1">
    <property type="nucleotide sequence ID" value="NC_006958.1"/>
</dbReference>
<dbReference type="SMR" id="P46395"/>
<dbReference type="STRING" id="196627.cg2885"/>
<dbReference type="KEGG" id="cgb:cg2885"/>
<dbReference type="KEGG" id="cgl:Cgl2604"/>
<dbReference type="PATRIC" id="fig|196627.13.peg.2540"/>
<dbReference type="eggNOG" id="COG0161">
    <property type="taxonomic scope" value="Bacteria"/>
</dbReference>
<dbReference type="HOGENOM" id="CLU_016922_4_3_11"/>
<dbReference type="OrthoDB" id="9801052at2"/>
<dbReference type="BioCyc" id="CORYNE:G18NG-12220-MONOMER"/>
<dbReference type="BRENDA" id="2.6.1.19">
    <property type="organism ID" value="960"/>
</dbReference>
<dbReference type="BRENDA" id="2.6.1.62">
    <property type="organism ID" value="960"/>
</dbReference>
<dbReference type="UniPathway" id="UPA00078">
    <property type="reaction ID" value="UER00160"/>
</dbReference>
<dbReference type="Proteomes" id="UP000000582">
    <property type="component" value="Chromosome"/>
</dbReference>
<dbReference type="Proteomes" id="UP000001009">
    <property type="component" value="Chromosome"/>
</dbReference>
<dbReference type="GO" id="GO:0005737">
    <property type="term" value="C:cytoplasm"/>
    <property type="evidence" value="ECO:0007669"/>
    <property type="project" value="UniProtKB-SubCell"/>
</dbReference>
<dbReference type="GO" id="GO:0004015">
    <property type="term" value="F:adenosylmethionine-8-amino-7-oxononanoate transaminase activity"/>
    <property type="evidence" value="ECO:0007669"/>
    <property type="project" value="UniProtKB-UniRule"/>
</dbReference>
<dbReference type="GO" id="GO:0030170">
    <property type="term" value="F:pyridoxal phosphate binding"/>
    <property type="evidence" value="ECO:0007669"/>
    <property type="project" value="UniProtKB-UniRule"/>
</dbReference>
<dbReference type="GO" id="GO:0009102">
    <property type="term" value="P:biotin biosynthetic process"/>
    <property type="evidence" value="ECO:0007669"/>
    <property type="project" value="UniProtKB-UniRule"/>
</dbReference>
<dbReference type="CDD" id="cd00610">
    <property type="entry name" value="OAT_like"/>
    <property type="match status" value="1"/>
</dbReference>
<dbReference type="FunFam" id="3.40.640.10:FF:000004">
    <property type="entry name" value="Acetylornithine aminotransferase"/>
    <property type="match status" value="1"/>
</dbReference>
<dbReference type="Gene3D" id="3.90.1150.10">
    <property type="entry name" value="Aspartate Aminotransferase, domain 1"/>
    <property type="match status" value="1"/>
</dbReference>
<dbReference type="Gene3D" id="3.40.640.10">
    <property type="entry name" value="Type I PLP-dependent aspartate aminotransferase-like (Major domain)"/>
    <property type="match status" value="1"/>
</dbReference>
<dbReference type="HAMAP" id="MF_00834">
    <property type="entry name" value="BioA"/>
    <property type="match status" value="1"/>
</dbReference>
<dbReference type="InterPro" id="IPR005814">
    <property type="entry name" value="Aminotrans_3"/>
</dbReference>
<dbReference type="InterPro" id="IPR049704">
    <property type="entry name" value="Aminotrans_3_PPA_site"/>
</dbReference>
<dbReference type="InterPro" id="IPR005815">
    <property type="entry name" value="BioA"/>
</dbReference>
<dbReference type="InterPro" id="IPR015424">
    <property type="entry name" value="PyrdxlP-dep_Trfase"/>
</dbReference>
<dbReference type="InterPro" id="IPR015421">
    <property type="entry name" value="PyrdxlP-dep_Trfase_major"/>
</dbReference>
<dbReference type="InterPro" id="IPR015422">
    <property type="entry name" value="PyrdxlP-dep_Trfase_small"/>
</dbReference>
<dbReference type="NCBIfam" id="TIGR00508">
    <property type="entry name" value="bioA"/>
    <property type="match status" value="1"/>
</dbReference>
<dbReference type="NCBIfam" id="NF004624">
    <property type="entry name" value="PRK05964.1"/>
    <property type="match status" value="1"/>
</dbReference>
<dbReference type="PANTHER" id="PTHR42684">
    <property type="entry name" value="ADENOSYLMETHIONINE-8-AMINO-7-OXONONANOATE AMINOTRANSFERASE"/>
    <property type="match status" value="1"/>
</dbReference>
<dbReference type="PANTHER" id="PTHR42684:SF17">
    <property type="entry name" value="ADENOSYLMETHIONINE-8-AMINO-7-OXONONANOATE AMINOTRANSFERASE"/>
    <property type="match status" value="1"/>
</dbReference>
<dbReference type="Pfam" id="PF00202">
    <property type="entry name" value="Aminotran_3"/>
    <property type="match status" value="1"/>
</dbReference>
<dbReference type="PIRSF" id="PIRSF000521">
    <property type="entry name" value="Transaminase_4ab_Lys_Orn"/>
    <property type="match status" value="1"/>
</dbReference>
<dbReference type="SUPFAM" id="SSF53383">
    <property type="entry name" value="PLP-dependent transferases"/>
    <property type="match status" value="1"/>
</dbReference>
<dbReference type="PROSITE" id="PS00600">
    <property type="entry name" value="AA_TRANSFER_CLASS_3"/>
    <property type="match status" value="1"/>
</dbReference>
<comment type="function">
    <text evidence="1 2">Catalyzes the transfer of the alpha-amino group from S-adenosyl-L-methionine (SAM) to 7-keto-8-aminopelargonic acid (KAPA) to form 7,8-diaminopelargonic acid (DAPA). It is the only aminotransferase known to utilize SAM as an amino donor.</text>
</comment>
<comment type="catalytic activity">
    <reaction evidence="1">
        <text>(8S)-8-amino-7-oxononanoate + S-adenosyl-L-methionine = S-adenosyl-4-methylsulfanyl-2-oxobutanoate + (7R,8S)-7,8-diammoniononanoate</text>
        <dbReference type="Rhea" id="RHEA:16861"/>
        <dbReference type="ChEBI" id="CHEBI:16490"/>
        <dbReference type="ChEBI" id="CHEBI:59789"/>
        <dbReference type="ChEBI" id="CHEBI:149468"/>
        <dbReference type="ChEBI" id="CHEBI:149469"/>
        <dbReference type="EC" id="2.6.1.62"/>
    </reaction>
</comment>
<comment type="cofactor">
    <cofactor evidence="1">
        <name>pyridoxal 5'-phosphate</name>
        <dbReference type="ChEBI" id="CHEBI:597326"/>
    </cofactor>
</comment>
<comment type="pathway">
    <text evidence="1">Cofactor biosynthesis; biotin biosynthesis; 7,8-diaminononanoate from 8-amino-7-oxononanoate (SAM route): step 1/1.</text>
</comment>
<comment type="subunit">
    <text evidence="1">Homodimer.</text>
</comment>
<comment type="subcellular location">
    <subcellularLocation>
        <location evidence="1">Cytoplasm</location>
    </subcellularLocation>
</comment>
<comment type="similarity">
    <text evidence="1">Belongs to the class-III pyridoxal-phosphate-dependent aminotransferase family. BioA subfamily.</text>
</comment>
<proteinExistence type="inferred from homology"/>
<gene>
    <name evidence="1" type="primary">bioA</name>
    <name type="ordered locus">Cgl2604</name>
    <name type="ordered locus">cg2885</name>
</gene>
<feature type="chain" id="PRO_0000120365" description="Adenosylmethionine-8-amino-7-oxononanoate aminotransferase">
    <location>
        <begin position="1"/>
        <end position="423"/>
    </location>
</feature>
<feature type="binding site" evidence="1">
    <location>
        <position position="51"/>
    </location>
    <ligand>
        <name>substrate</name>
    </ligand>
</feature>
<feature type="binding site" evidence="1">
    <location>
        <begin position="111"/>
        <end position="112"/>
    </location>
    <ligand>
        <name>pyridoxal 5'-phosphate</name>
        <dbReference type="ChEBI" id="CHEBI:597326"/>
    </ligand>
</feature>
<feature type="binding site" evidence="1">
    <location>
        <position position="144"/>
    </location>
    <ligand>
        <name>substrate</name>
    </ligand>
</feature>
<feature type="binding site" evidence="1">
    <location>
        <position position="243"/>
    </location>
    <ligand>
        <name>pyridoxal 5'-phosphate</name>
        <dbReference type="ChEBI" id="CHEBI:597326"/>
    </ligand>
</feature>
<feature type="binding site" evidence="1">
    <location>
        <position position="272"/>
    </location>
    <ligand>
        <name>substrate</name>
    </ligand>
</feature>
<feature type="binding site" evidence="1">
    <location>
        <position position="306"/>
    </location>
    <ligand>
        <name>substrate</name>
    </ligand>
</feature>
<feature type="binding site" evidence="1">
    <location>
        <begin position="307"/>
        <end position="308"/>
    </location>
    <ligand>
        <name>pyridoxal 5'-phosphate</name>
        <dbReference type="ChEBI" id="CHEBI:597326"/>
    </ligand>
</feature>
<feature type="binding site" evidence="1">
    <location>
        <position position="390"/>
    </location>
    <ligand>
        <name>substrate</name>
    </ligand>
</feature>
<feature type="site" description="Participates in the substrate recognition with KAPA and in a stacking interaction with the adenine ring of SAM" evidence="1">
    <location>
        <position position="18"/>
    </location>
</feature>
<feature type="modified residue" description="N6-(pyridoxal phosphate)lysine" evidence="1">
    <location>
        <position position="272"/>
    </location>
</feature>
<feature type="sequence conflict" description="In Ref. 1; BAA03167." evidence="3" ref="1">
    <original>K</original>
    <variation>N</variation>
    <location>
        <position position="30"/>
    </location>
</feature>
<feature type="sequence conflict" description="In Ref. 1; BAA03167." evidence="3" ref="1">
    <original>A</original>
    <variation>R</variation>
    <location>
        <position position="65"/>
    </location>
</feature>
<feature type="sequence conflict" description="In Ref. 1; BAA03167." evidence="3" ref="1">
    <original>S</original>
    <variation>A</variation>
    <location>
        <position position="101"/>
    </location>
</feature>
<feature type="sequence conflict" description="In Ref. 1; BAA03167." evidence="3" ref="1">
    <original>R</original>
    <variation>H</variation>
    <location>
        <position position="193"/>
    </location>
</feature>
<feature type="sequence conflict" description="In Ref. 1; BAA03167." evidence="3" ref="1">
    <original>T</original>
    <variation>A</variation>
    <location>
        <position position="231"/>
    </location>
</feature>
<feature type="sequence conflict" description="In Ref. 1; BAA03167." evidence="3" ref="1">
    <original>L</original>
    <variation>V</variation>
    <location>
        <position position="263"/>
    </location>
</feature>
<feature type="sequence conflict" description="In Ref. 1; BAA03167." evidence="3" ref="1">
    <original>L</original>
    <variation>V</variation>
    <location>
        <position position="285"/>
    </location>
</feature>
<feature type="sequence conflict" description="In Ref. 1; BAA03167." evidence="3" ref="1">
    <original>STPN</original>
    <variation>RSPE</variation>
    <location>
        <begin position="295"/>
        <end position="298"/>
    </location>
</feature>
<feature type="sequence conflict" description="In Ref. 1; BAA03167." evidence="3" ref="1">
    <original>A</original>
    <variation>V</variation>
    <location>
        <position position="302"/>
    </location>
</feature>
<feature type="sequence conflict" description="In Ref. 1; BAA03167." evidence="3" ref="1">
    <original>A</original>
    <variation>E</variation>
    <location>
        <position position="317"/>
    </location>
</feature>
<feature type="sequence conflict" description="In Ref. 1; BAA03167." evidence="3" ref="1">
    <original>R</original>
    <variation>K</variation>
    <location>
        <position position="337"/>
    </location>
</feature>
<feature type="sequence conflict" description="In Ref. 1; BAA03167." evidence="3" ref="1">
    <original>E</original>
    <variation>K</variation>
    <location>
        <position position="341"/>
    </location>
</feature>
<feature type="sequence conflict" description="In Ref. 1; BAA03167." evidence="3" ref="1">
    <original>QHL</original>
    <variation>RCI</variation>
    <location>
        <begin position="350"/>
        <end position="352"/>
    </location>
</feature>
<feature type="sequence conflict" description="In Ref. 1; BAA03167." evidence="3" ref="1">
    <original>T</original>
    <variation>R</variation>
    <location>
        <position position="414"/>
    </location>
</feature>
<reference key="1">
    <citation type="journal article" date="1993" name="DNA Seq.">
        <title>Genomic organization of the biotin biosynthetic genes of coryneform bacteria: cloning and sequencing of the bioA-bioD genes from Brevibacterium flavum.</title>
        <authorList>
            <person name="Hatakeyama K."/>
            <person name="Hohama K."/>
            <person name="Vertes A.A."/>
            <person name="Kobayashi M."/>
            <person name="Kurusu Y."/>
            <person name="Yukawa H."/>
        </authorList>
    </citation>
    <scope>NUCLEOTIDE SEQUENCE [GENOMIC DNA]</scope>
    <scope>FUNCTION</scope>
    <source>
        <strain>MJ233</strain>
    </source>
</reference>
<reference key="2">
    <citation type="journal article" date="2003" name="Appl. Microbiol. Biotechnol.">
        <title>The Corynebacterium glutamicum genome: features and impacts on biotechnological processes.</title>
        <authorList>
            <person name="Ikeda M."/>
            <person name="Nakagawa S."/>
        </authorList>
    </citation>
    <scope>NUCLEOTIDE SEQUENCE [LARGE SCALE GENOMIC DNA]</scope>
    <source>
        <strain>ATCC 13032 / DSM 20300 / JCM 1318 / BCRC 11384 / CCUG 27702 / LMG 3730 / NBRC 12168 / NCIMB 10025 / NRRL B-2784 / 534</strain>
    </source>
</reference>
<reference key="3">
    <citation type="journal article" date="2003" name="J. Biotechnol.">
        <title>The complete Corynebacterium glutamicum ATCC 13032 genome sequence and its impact on the production of L-aspartate-derived amino acids and vitamins.</title>
        <authorList>
            <person name="Kalinowski J."/>
            <person name="Bathe B."/>
            <person name="Bartels D."/>
            <person name="Bischoff N."/>
            <person name="Bott M."/>
            <person name="Burkovski A."/>
            <person name="Dusch N."/>
            <person name="Eggeling L."/>
            <person name="Eikmanns B.J."/>
            <person name="Gaigalat L."/>
            <person name="Goesmann A."/>
            <person name="Hartmann M."/>
            <person name="Huthmacher K."/>
            <person name="Kraemer R."/>
            <person name="Linke B."/>
            <person name="McHardy A.C."/>
            <person name="Meyer F."/>
            <person name="Moeckel B."/>
            <person name="Pfefferle W."/>
            <person name="Puehler A."/>
            <person name="Rey D.A."/>
            <person name="Rueckert C."/>
            <person name="Rupp O."/>
            <person name="Sahm H."/>
            <person name="Wendisch V.F."/>
            <person name="Wiegraebe I."/>
            <person name="Tauch A."/>
        </authorList>
    </citation>
    <scope>NUCLEOTIDE SEQUENCE [LARGE SCALE GENOMIC DNA]</scope>
    <source>
        <strain>ATCC 13032 / DSM 20300 / JCM 1318 / BCRC 11384 / CCUG 27702 / LMG 3730 / NBRC 12168 / NCIMB 10025 / NRRL B-2784 / 534</strain>
    </source>
</reference>
<accession>P46395</accession>